<protein>
    <recommendedName>
        <fullName evidence="1">Large ribosomal subunit protein uL14</fullName>
    </recommendedName>
    <alternativeName>
        <fullName evidence="2">50S ribosomal protein L14</fullName>
    </alternativeName>
</protein>
<dbReference type="EMBL" id="CP000860">
    <property type="protein sequence ID" value="ACA58796.1"/>
    <property type="molecule type" value="Genomic_DNA"/>
</dbReference>
<dbReference type="RefSeq" id="WP_012301388.1">
    <property type="nucleotide sequence ID" value="NC_010424.1"/>
</dbReference>
<dbReference type="SMR" id="B1I1J8"/>
<dbReference type="STRING" id="477974.Daud_0235"/>
<dbReference type="KEGG" id="dau:Daud_0235"/>
<dbReference type="eggNOG" id="COG0093">
    <property type="taxonomic scope" value="Bacteria"/>
</dbReference>
<dbReference type="HOGENOM" id="CLU_095071_2_1_9"/>
<dbReference type="OrthoDB" id="9806379at2"/>
<dbReference type="Proteomes" id="UP000008544">
    <property type="component" value="Chromosome"/>
</dbReference>
<dbReference type="GO" id="GO:0022625">
    <property type="term" value="C:cytosolic large ribosomal subunit"/>
    <property type="evidence" value="ECO:0007669"/>
    <property type="project" value="TreeGrafter"/>
</dbReference>
<dbReference type="GO" id="GO:0070180">
    <property type="term" value="F:large ribosomal subunit rRNA binding"/>
    <property type="evidence" value="ECO:0007669"/>
    <property type="project" value="TreeGrafter"/>
</dbReference>
<dbReference type="GO" id="GO:0003735">
    <property type="term" value="F:structural constituent of ribosome"/>
    <property type="evidence" value="ECO:0007669"/>
    <property type="project" value="InterPro"/>
</dbReference>
<dbReference type="GO" id="GO:0006412">
    <property type="term" value="P:translation"/>
    <property type="evidence" value="ECO:0007669"/>
    <property type="project" value="UniProtKB-UniRule"/>
</dbReference>
<dbReference type="CDD" id="cd00337">
    <property type="entry name" value="Ribosomal_uL14"/>
    <property type="match status" value="1"/>
</dbReference>
<dbReference type="FunFam" id="2.40.150.20:FF:000001">
    <property type="entry name" value="50S ribosomal protein L14"/>
    <property type="match status" value="1"/>
</dbReference>
<dbReference type="Gene3D" id="2.40.150.20">
    <property type="entry name" value="Ribosomal protein L14"/>
    <property type="match status" value="1"/>
</dbReference>
<dbReference type="HAMAP" id="MF_01367">
    <property type="entry name" value="Ribosomal_uL14"/>
    <property type="match status" value="1"/>
</dbReference>
<dbReference type="InterPro" id="IPR000218">
    <property type="entry name" value="Ribosomal_uL14"/>
</dbReference>
<dbReference type="InterPro" id="IPR005745">
    <property type="entry name" value="Ribosomal_uL14_bac-type"/>
</dbReference>
<dbReference type="InterPro" id="IPR019972">
    <property type="entry name" value="Ribosomal_uL14_CS"/>
</dbReference>
<dbReference type="InterPro" id="IPR036853">
    <property type="entry name" value="Ribosomal_uL14_sf"/>
</dbReference>
<dbReference type="NCBIfam" id="TIGR01067">
    <property type="entry name" value="rplN_bact"/>
    <property type="match status" value="1"/>
</dbReference>
<dbReference type="PANTHER" id="PTHR11761">
    <property type="entry name" value="50S/60S RIBOSOMAL PROTEIN L14/L23"/>
    <property type="match status" value="1"/>
</dbReference>
<dbReference type="PANTHER" id="PTHR11761:SF3">
    <property type="entry name" value="LARGE RIBOSOMAL SUBUNIT PROTEIN UL14M"/>
    <property type="match status" value="1"/>
</dbReference>
<dbReference type="Pfam" id="PF00238">
    <property type="entry name" value="Ribosomal_L14"/>
    <property type="match status" value="1"/>
</dbReference>
<dbReference type="SMART" id="SM01374">
    <property type="entry name" value="Ribosomal_L14"/>
    <property type="match status" value="1"/>
</dbReference>
<dbReference type="SUPFAM" id="SSF50193">
    <property type="entry name" value="Ribosomal protein L14"/>
    <property type="match status" value="1"/>
</dbReference>
<dbReference type="PROSITE" id="PS00049">
    <property type="entry name" value="RIBOSOMAL_L14"/>
    <property type="match status" value="1"/>
</dbReference>
<keyword id="KW-1185">Reference proteome</keyword>
<keyword id="KW-0687">Ribonucleoprotein</keyword>
<keyword id="KW-0689">Ribosomal protein</keyword>
<keyword id="KW-0694">RNA-binding</keyword>
<keyword id="KW-0699">rRNA-binding</keyword>
<sequence>MIQVQTVLNVADNTGAKKLMCIRILGSSFRRYASIGDIIVCSCKEAAPGGVVKKGDVVKAVVVRTKKEIGRPDGSYIKFDENAAVVIKDDKSPRGTRIFGPVARELREKDFMKIVSLAPEVL</sequence>
<proteinExistence type="inferred from homology"/>
<evidence type="ECO:0000255" key="1">
    <source>
        <dbReference type="HAMAP-Rule" id="MF_01367"/>
    </source>
</evidence>
<evidence type="ECO:0000305" key="2"/>
<name>RL14_DESAP</name>
<accession>B1I1J8</accession>
<gene>
    <name evidence="1" type="primary">rplN</name>
    <name type="ordered locus">Daud_0235</name>
</gene>
<comment type="function">
    <text evidence="1">Binds to 23S rRNA. Forms part of two intersubunit bridges in the 70S ribosome.</text>
</comment>
<comment type="subunit">
    <text evidence="1">Part of the 50S ribosomal subunit. Forms a cluster with proteins L3 and L19. In the 70S ribosome, L14 and L19 interact and together make contacts with the 16S rRNA in bridges B5 and B8.</text>
</comment>
<comment type="similarity">
    <text evidence="1">Belongs to the universal ribosomal protein uL14 family.</text>
</comment>
<reference key="1">
    <citation type="submission" date="2007-10" db="EMBL/GenBank/DDBJ databases">
        <title>Complete sequence of chromosome of Desulforudis audaxviator MP104C.</title>
        <authorList>
            <person name="Copeland A."/>
            <person name="Lucas S."/>
            <person name="Lapidus A."/>
            <person name="Barry K."/>
            <person name="Glavina del Rio T."/>
            <person name="Dalin E."/>
            <person name="Tice H."/>
            <person name="Bruce D."/>
            <person name="Pitluck S."/>
            <person name="Lowry S.R."/>
            <person name="Larimer F."/>
            <person name="Land M.L."/>
            <person name="Hauser L."/>
            <person name="Kyrpides N."/>
            <person name="Ivanova N.N."/>
            <person name="Richardson P."/>
        </authorList>
    </citation>
    <scope>NUCLEOTIDE SEQUENCE [LARGE SCALE GENOMIC DNA]</scope>
    <source>
        <strain>MP104C</strain>
    </source>
</reference>
<organism>
    <name type="scientific">Desulforudis audaxviator (strain MP104C)</name>
    <dbReference type="NCBI Taxonomy" id="477974"/>
    <lineage>
        <taxon>Bacteria</taxon>
        <taxon>Bacillati</taxon>
        <taxon>Bacillota</taxon>
        <taxon>Clostridia</taxon>
        <taxon>Thermoanaerobacterales</taxon>
        <taxon>Candidatus Desulforudaceae</taxon>
        <taxon>Candidatus Desulforudis</taxon>
    </lineage>
</organism>
<feature type="chain" id="PRO_1000144257" description="Large ribosomal subunit protein uL14">
    <location>
        <begin position="1"/>
        <end position="122"/>
    </location>
</feature>